<comment type="function">
    <text evidence="1">Catalyzes the transfer of the enolpyruvyl moiety of phosphoenolpyruvate (PEP) to the 5-hydroxyl of shikimate-3-phosphate (S3P) to produce enolpyruvyl shikimate-3-phosphate and inorganic phosphate.</text>
</comment>
<comment type="catalytic activity">
    <reaction evidence="1">
        <text>3-phosphoshikimate + phosphoenolpyruvate = 5-O-(1-carboxyvinyl)-3-phosphoshikimate + phosphate</text>
        <dbReference type="Rhea" id="RHEA:21256"/>
        <dbReference type="ChEBI" id="CHEBI:43474"/>
        <dbReference type="ChEBI" id="CHEBI:57701"/>
        <dbReference type="ChEBI" id="CHEBI:58702"/>
        <dbReference type="ChEBI" id="CHEBI:145989"/>
        <dbReference type="EC" id="2.5.1.19"/>
    </reaction>
    <physiologicalReaction direction="left-to-right" evidence="1">
        <dbReference type="Rhea" id="RHEA:21257"/>
    </physiologicalReaction>
</comment>
<comment type="pathway">
    <text evidence="1">Metabolic intermediate biosynthesis; chorismate biosynthesis; chorismate from D-erythrose 4-phosphate and phosphoenolpyruvate: step 6/7.</text>
</comment>
<comment type="subunit">
    <text evidence="1">Monomer.</text>
</comment>
<comment type="subcellular location">
    <subcellularLocation>
        <location evidence="1">Cytoplasm</location>
    </subcellularLocation>
</comment>
<comment type="similarity">
    <text evidence="1">Belongs to the EPSP synthase family.</text>
</comment>
<protein>
    <recommendedName>
        <fullName evidence="1">3-phosphoshikimate 1-carboxyvinyltransferase</fullName>
        <ecNumber evidence="1">2.5.1.19</ecNumber>
    </recommendedName>
    <alternativeName>
        <fullName evidence="1">5-enolpyruvylshikimate-3-phosphate synthase</fullName>
        <shortName evidence="1">EPSP synthase</shortName>
        <shortName evidence="1">EPSPS</shortName>
    </alternativeName>
</protein>
<proteinExistence type="inferred from homology"/>
<gene>
    <name evidence="1" type="primary">aroA</name>
    <name type="ordered locus">YPTS_1516</name>
</gene>
<keyword id="KW-0028">Amino-acid biosynthesis</keyword>
<keyword id="KW-0057">Aromatic amino acid biosynthesis</keyword>
<keyword id="KW-0963">Cytoplasm</keyword>
<keyword id="KW-0808">Transferase</keyword>
<evidence type="ECO:0000255" key="1">
    <source>
        <dbReference type="HAMAP-Rule" id="MF_00210"/>
    </source>
</evidence>
<organism>
    <name type="scientific">Yersinia pseudotuberculosis serotype IB (strain PB1/+)</name>
    <dbReference type="NCBI Taxonomy" id="502801"/>
    <lineage>
        <taxon>Bacteria</taxon>
        <taxon>Pseudomonadati</taxon>
        <taxon>Pseudomonadota</taxon>
        <taxon>Gammaproteobacteria</taxon>
        <taxon>Enterobacterales</taxon>
        <taxon>Yersiniaceae</taxon>
        <taxon>Yersinia</taxon>
    </lineage>
</organism>
<feature type="chain" id="PRO_1000099768" description="3-phosphoshikimate 1-carboxyvinyltransferase">
    <location>
        <begin position="1"/>
        <end position="428"/>
    </location>
</feature>
<feature type="active site" description="Proton acceptor" evidence="1">
    <location>
        <position position="314"/>
    </location>
</feature>
<feature type="binding site" evidence="1">
    <location>
        <position position="23"/>
    </location>
    <ligand>
        <name>3-phosphoshikimate</name>
        <dbReference type="ChEBI" id="CHEBI:145989"/>
    </ligand>
</feature>
<feature type="binding site" evidence="1">
    <location>
        <position position="23"/>
    </location>
    <ligand>
        <name>phosphoenolpyruvate</name>
        <dbReference type="ChEBI" id="CHEBI:58702"/>
    </ligand>
</feature>
<feature type="binding site" evidence="1">
    <location>
        <position position="24"/>
    </location>
    <ligand>
        <name>3-phosphoshikimate</name>
        <dbReference type="ChEBI" id="CHEBI:145989"/>
    </ligand>
</feature>
<feature type="binding site" evidence="1">
    <location>
        <position position="28"/>
    </location>
    <ligand>
        <name>3-phosphoshikimate</name>
        <dbReference type="ChEBI" id="CHEBI:145989"/>
    </ligand>
</feature>
<feature type="binding site" evidence="1">
    <location>
        <position position="97"/>
    </location>
    <ligand>
        <name>phosphoenolpyruvate</name>
        <dbReference type="ChEBI" id="CHEBI:58702"/>
    </ligand>
</feature>
<feature type="binding site" evidence="1">
    <location>
        <position position="125"/>
    </location>
    <ligand>
        <name>phosphoenolpyruvate</name>
        <dbReference type="ChEBI" id="CHEBI:58702"/>
    </ligand>
</feature>
<feature type="binding site" evidence="1">
    <location>
        <position position="170"/>
    </location>
    <ligand>
        <name>3-phosphoshikimate</name>
        <dbReference type="ChEBI" id="CHEBI:145989"/>
    </ligand>
</feature>
<feature type="binding site" evidence="1">
    <location>
        <position position="171"/>
    </location>
    <ligand>
        <name>3-phosphoshikimate</name>
        <dbReference type="ChEBI" id="CHEBI:145989"/>
    </ligand>
</feature>
<feature type="binding site" evidence="1">
    <location>
        <position position="172"/>
    </location>
    <ligand>
        <name>3-phosphoshikimate</name>
        <dbReference type="ChEBI" id="CHEBI:145989"/>
    </ligand>
</feature>
<feature type="binding site" evidence="1">
    <location>
        <position position="172"/>
    </location>
    <ligand>
        <name>phosphoenolpyruvate</name>
        <dbReference type="ChEBI" id="CHEBI:58702"/>
    </ligand>
</feature>
<feature type="binding site" evidence="1">
    <location>
        <position position="198"/>
    </location>
    <ligand>
        <name>3-phosphoshikimate</name>
        <dbReference type="ChEBI" id="CHEBI:145989"/>
    </ligand>
</feature>
<feature type="binding site" evidence="1">
    <location>
        <position position="314"/>
    </location>
    <ligand>
        <name>3-phosphoshikimate</name>
        <dbReference type="ChEBI" id="CHEBI:145989"/>
    </ligand>
</feature>
<feature type="binding site" evidence="1">
    <location>
        <position position="337"/>
    </location>
    <ligand>
        <name>3-phosphoshikimate</name>
        <dbReference type="ChEBI" id="CHEBI:145989"/>
    </ligand>
</feature>
<feature type="binding site" evidence="1">
    <location>
        <position position="341"/>
    </location>
    <ligand>
        <name>3-phosphoshikimate</name>
        <dbReference type="ChEBI" id="CHEBI:145989"/>
    </ligand>
</feature>
<feature type="binding site" evidence="1">
    <location>
        <position position="345"/>
    </location>
    <ligand>
        <name>phosphoenolpyruvate</name>
        <dbReference type="ChEBI" id="CHEBI:58702"/>
    </ligand>
</feature>
<feature type="binding site" evidence="1">
    <location>
        <position position="387"/>
    </location>
    <ligand>
        <name>phosphoenolpyruvate</name>
        <dbReference type="ChEBI" id="CHEBI:58702"/>
    </ligand>
</feature>
<feature type="binding site" evidence="1">
    <location>
        <position position="412"/>
    </location>
    <ligand>
        <name>phosphoenolpyruvate</name>
        <dbReference type="ChEBI" id="CHEBI:58702"/>
    </ligand>
</feature>
<name>AROA_YERPB</name>
<reference key="1">
    <citation type="submission" date="2008-04" db="EMBL/GenBank/DDBJ databases">
        <title>Complete sequence of Yersinia pseudotuberculosis PB1/+.</title>
        <authorList>
            <person name="Copeland A."/>
            <person name="Lucas S."/>
            <person name="Lapidus A."/>
            <person name="Glavina del Rio T."/>
            <person name="Dalin E."/>
            <person name="Tice H."/>
            <person name="Bruce D."/>
            <person name="Goodwin L."/>
            <person name="Pitluck S."/>
            <person name="Munk A.C."/>
            <person name="Brettin T."/>
            <person name="Detter J.C."/>
            <person name="Han C."/>
            <person name="Tapia R."/>
            <person name="Schmutz J."/>
            <person name="Larimer F."/>
            <person name="Land M."/>
            <person name="Hauser L."/>
            <person name="Challacombe J.F."/>
            <person name="Green L."/>
            <person name="Lindler L.E."/>
            <person name="Nikolich M.P."/>
            <person name="Richardson P."/>
        </authorList>
    </citation>
    <scope>NUCLEOTIDE SEQUENCE [LARGE SCALE GENOMIC DNA]</scope>
    <source>
        <strain>PB1/+</strain>
    </source>
</reference>
<accession>B2KA23</accession>
<sequence>MLESLTLQPIALVNGTVNLPGSKSVSNRALLLAALAEGTTQLNNVLDSDDIRHMLNALQALGVNFRLSADRTCCEVDGLGGKLVAEQPLSLFLGNAGTAMRPLAAVLCLGNSDIVLTGEPRMKERPIGHLVDALRQGGAQIDYLEQENYPPLRLRGGFRGGELTVDGRVSSQFLTALLMTAPLAEQDTTIRIMGDLVSKPYIDITLHLMKAFGIDVGHENYQIFHIKGGQTYRSPGTYLVEGDASSASYFLAAAAIKGGTVRVTGIGKKSVQGDTKFADVLEKMGAKVTWGDDYIECSRGELQGIDMDMNHIPDAAMTIATTALFATGPTTIRNIYNWRVKETDRLTAMATELRKVGAEVEEGEDYIRVVPPVQLTAADIGTYDDHRMAMCFSLVALSDTPVTILDPKCTAKTFPDYFEQFARLSQLA</sequence>
<dbReference type="EC" id="2.5.1.19" evidence="1"/>
<dbReference type="EMBL" id="CP001048">
    <property type="protein sequence ID" value="ACC88488.1"/>
    <property type="molecule type" value="Genomic_DNA"/>
</dbReference>
<dbReference type="RefSeq" id="WP_011192056.1">
    <property type="nucleotide sequence ID" value="NZ_CP009780.1"/>
</dbReference>
<dbReference type="SMR" id="B2KA23"/>
<dbReference type="GeneID" id="49786502"/>
<dbReference type="KEGG" id="ypb:YPTS_1516"/>
<dbReference type="PATRIC" id="fig|502801.10.peg.881"/>
<dbReference type="UniPathway" id="UPA00053">
    <property type="reaction ID" value="UER00089"/>
</dbReference>
<dbReference type="GO" id="GO:0005737">
    <property type="term" value="C:cytoplasm"/>
    <property type="evidence" value="ECO:0007669"/>
    <property type="project" value="UniProtKB-SubCell"/>
</dbReference>
<dbReference type="GO" id="GO:0003866">
    <property type="term" value="F:3-phosphoshikimate 1-carboxyvinyltransferase activity"/>
    <property type="evidence" value="ECO:0007669"/>
    <property type="project" value="UniProtKB-UniRule"/>
</dbReference>
<dbReference type="GO" id="GO:0008652">
    <property type="term" value="P:amino acid biosynthetic process"/>
    <property type="evidence" value="ECO:0007669"/>
    <property type="project" value="UniProtKB-KW"/>
</dbReference>
<dbReference type="GO" id="GO:0009073">
    <property type="term" value="P:aromatic amino acid family biosynthetic process"/>
    <property type="evidence" value="ECO:0007669"/>
    <property type="project" value="UniProtKB-KW"/>
</dbReference>
<dbReference type="GO" id="GO:0009423">
    <property type="term" value="P:chorismate biosynthetic process"/>
    <property type="evidence" value="ECO:0007669"/>
    <property type="project" value="UniProtKB-UniRule"/>
</dbReference>
<dbReference type="CDD" id="cd01556">
    <property type="entry name" value="EPSP_synthase"/>
    <property type="match status" value="1"/>
</dbReference>
<dbReference type="FunFam" id="3.65.10.10:FF:000003">
    <property type="entry name" value="3-phosphoshikimate 1-carboxyvinyltransferase"/>
    <property type="match status" value="1"/>
</dbReference>
<dbReference type="FunFam" id="3.65.10.10:FF:000004">
    <property type="entry name" value="3-phosphoshikimate 1-carboxyvinyltransferase"/>
    <property type="match status" value="1"/>
</dbReference>
<dbReference type="Gene3D" id="3.65.10.10">
    <property type="entry name" value="Enolpyruvate transferase domain"/>
    <property type="match status" value="2"/>
</dbReference>
<dbReference type="HAMAP" id="MF_00210">
    <property type="entry name" value="EPSP_synth"/>
    <property type="match status" value="1"/>
</dbReference>
<dbReference type="InterPro" id="IPR001986">
    <property type="entry name" value="Enolpyruvate_Tfrase_dom"/>
</dbReference>
<dbReference type="InterPro" id="IPR036968">
    <property type="entry name" value="Enolpyruvate_Tfrase_sf"/>
</dbReference>
<dbReference type="InterPro" id="IPR006264">
    <property type="entry name" value="EPSP_synthase"/>
</dbReference>
<dbReference type="InterPro" id="IPR023193">
    <property type="entry name" value="EPSP_synthase_CS"/>
</dbReference>
<dbReference type="InterPro" id="IPR013792">
    <property type="entry name" value="RNA3'P_cycl/enolpyr_Trfase_a/b"/>
</dbReference>
<dbReference type="NCBIfam" id="TIGR01356">
    <property type="entry name" value="aroA"/>
    <property type="match status" value="1"/>
</dbReference>
<dbReference type="PANTHER" id="PTHR21090">
    <property type="entry name" value="AROM/DEHYDROQUINATE SYNTHASE"/>
    <property type="match status" value="1"/>
</dbReference>
<dbReference type="PANTHER" id="PTHR21090:SF5">
    <property type="entry name" value="PENTAFUNCTIONAL AROM POLYPEPTIDE"/>
    <property type="match status" value="1"/>
</dbReference>
<dbReference type="Pfam" id="PF00275">
    <property type="entry name" value="EPSP_synthase"/>
    <property type="match status" value="1"/>
</dbReference>
<dbReference type="PIRSF" id="PIRSF000505">
    <property type="entry name" value="EPSPS"/>
    <property type="match status" value="1"/>
</dbReference>
<dbReference type="SUPFAM" id="SSF55205">
    <property type="entry name" value="EPT/RTPC-like"/>
    <property type="match status" value="1"/>
</dbReference>
<dbReference type="PROSITE" id="PS00104">
    <property type="entry name" value="EPSP_SYNTHASE_1"/>
    <property type="match status" value="1"/>
</dbReference>
<dbReference type="PROSITE" id="PS00885">
    <property type="entry name" value="EPSP_SYNTHASE_2"/>
    <property type="match status" value="1"/>
</dbReference>